<dbReference type="EMBL" id="L27596">
    <property type="protein sequence ID" value="AAA20626.1"/>
    <property type="molecule type" value="Genomic_DNA"/>
</dbReference>
<protein>
    <recommendedName>
        <fullName>Uncharacterized protein in pepT 3'region</fullName>
    </recommendedName>
    <alternativeName>
        <fullName>ORF4</fullName>
    </alternativeName>
</protein>
<proteinExistence type="predicted"/>
<accession>P42022</accession>
<organism>
    <name type="scientific">Lactococcus lactis subsp. cremoris</name>
    <name type="common">Streptococcus cremoris</name>
    <dbReference type="NCBI Taxonomy" id="1359"/>
    <lineage>
        <taxon>Bacteria</taxon>
        <taxon>Bacillati</taxon>
        <taxon>Bacillota</taxon>
        <taxon>Bacilli</taxon>
        <taxon>Lactobacillales</taxon>
        <taxon>Streptococcaceae</taxon>
        <taxon>Lactococcus</taxon>
    </lineage>
</organism>
<feature type="chain" id="PRO_0000066393" description="Uncharacterized protein in pepT 3'region">
    <location>
        <begin position="1"/>
        <end position="18" status="greater than"/>
    </location>
</feature>
<feature type="non-terminal residue">
    <location>
        <position position="18"/>
    </location>
</feature>
<reference key="1">
    <citation type="journal article" date="1994" name="J. Bacteriol.">
        <title>Tripeptidase gene (pepT) of Lactococcus lactis: molecular cloning and nucleotide sequencing of pepT and construction of a chromosomal deletion mutant.</title>
        <authorList>
            <person name="Mierau I."/>
            <person name="Haandrikman A.J."/>
            <person name="Velterop O."/>
            <person name="Tan P.S.T."/>
            <person name="Leenhouts K.L."/>
            <person name="Konings W.N."/>
            <person name="Venema G."/>
            <person name="Kok J."/>
        </authorList>
    </citation>
    <scope>NUCLEOTIDE SEQUENCE [GENOMIC DNA]</scope>
</reference>
<sequence length="18" mass="1920">MSQNTKGKLSLVGLSLMI</sequence>
<name>YPE4_LACLC</name>